<feature type="chain" id="PRO_1000213605" description="CDP-archaeol synthase">
    <location>
        <begin position="1"/>
        <end position="166"/>
    </location>
</feature>
<feature type="transmembrane region" description="Helical" evidence="1">
    <location>
        <begin position="7"/>
        <end position="27"/>
    </location>
</feature>
<feature type="transmembrane region" description="Helical" evidence="1">
    <location>
        <begin position="55"/>
        <end position="75"/>
    </location>
</feature>
<feature type="transmembrane region" description="Helical" evidence="1">
    <location>
        <begin position="78"/>
        <end position="98"/>
    </location>
</feature>
<feature type="transmembrane region" description="Helical" evidence="1">
    <location>
        <begin position="116"/>
        <end position="136"/>
    </location>
</feature>
<feature type="transmembrane region" description="Helical" evidence="1">
    <location>
        <begin position="138"/>
        <end position="158"/>
    </location>
</feature>
<protein>
    <recommendedName>
        <fullName evidence="1">CDP-archaeol synthase</fullName>
        <ecNumber evidence="1">2.7.7.67</ecNumber>
    </recommendedName>
    <alternativeName>
        <fullName evidence="1">CDP-2,3-bis-(O-geranylgeranyl)-sn-glycerol synthase</fullName>
    </alternativeName>
</protein>
<gene>
    <name evidence="1" type="primary">carS</name>
    <name type="ordered locus">M1627_1414</name>
</gene>
<reference key="1">
    <citation type="journal article" date="2009" name="Proc. Natl. Acad. Sci. U.S.A.">
        <title>Biogeography of the Sulfolobus islandicus pan-genome.</title>
        <authorList>
            <person name="Reno M.L."/>
            <person name="Held N.L."/>
            <person name="Fields C.J."/>
            <person name="Burke P.V."/>
            <person name="Whitaker R.J."/>
        </authorList>
    </citation>
    <scope>NUCLEOTIDE SEQUENCE [LARGE SCALE GENOMIC DNA]</scope>
    <source>
        <strain>M.16.27</strain>
    </source>
</reference>
<comment type="function">
    <text evidence="1">Catalyzes the formation of CDP-2,3-bis-(O-geranylgeranyl)-sn-glycerol (CDP-archaeol) from 2,3-bis-(O-geranylgeranyl)-sn-glycerol 1-phosphate (DGGGP) and CTP. This reaction is the third ether-bond-formation step in the biosynthesis of archaeal membrane lipids.</text>
</comment>
<comment type="catalytic activity">
    <reaction evidence="1">
        <text>2,3-bis-O-(geranylgeranyl)-sn-glycerol 1-phosphate + CTP + H(+) = CDP-2,3-bis-O-(geranylgeranyl)-sn-glycerol + diphosphate</text>
        <dbReference type="Rhea" id="RHEA:25690"/>
        <dbReference type="ChEBI" id="CHEBI:15378"/>
        <dbReference type="ChEBI" id="CHEBI:33019"/>
        <dbReference type="ChEBI" id="CHEBI:37563"/>
        <dbReference type="ChEBI" id="CHEBI:58837"/>
        <dbReference type="ChEBI" id="CHEBI:58838"/>
        <dbReference type="EC" id="2.7.7.67"/>
    </reaction>
</comment>
<comment type="cofactor">
    <cofactor evidence="1">
        <name>Mg(2+)</name>
        <dbReference type="ChEBI" id="CHEBI:18420"/>
    </cofactor>
</comment>
<comment type="pathway">
    <text evidence="1">Membrane lipid metabolism; glycerophospholipid metabolism.</text>
</comment>
<comment type="subcellular location">
    <subcellularLocation>
        <location evidence="1">Cell membrane</location>
        <topology evidence="1">Multi-pass membrane protein</topology>
    </subcellularLocation>
</comment>
<comment type="similarity">
    <text evidence="1">Belongs to the CDP-archaeol synthase family.</text>
</comment>
<accession>C3N5M2</accession>
<keyword id="KW-1003">Cell membrane</keyword>
<keyword id="KW-0444">Lipid biosynthesis</keyword>
<keyword id="KW-0443">Lipid metabolism</keyword>
<keyword id="KW-0460">Magnesium</keyword>
<keyword id="KW-0472">Membrane</keyword>
<keyword id="KW-0594">Phospholipid biosynthesis</keyword>
<keyword id="KW-1208">Phospholipid metabolism</keyword>
<keyword id="KW-0808">Transferase</keyword>
<keyword id="KW-0812">Transmembrane</keyword>
<keyword id="KW-1133">Transmembrane helix</keyword>
<evidence type="ECO:0000255" key="1">
    <source>
        <dbReference type="HAMAP-Rule" id="MF_01117"/>
    </source>
</evidence>
<name>CDPAS_SACI3</name>
<dbReference type="EC" id="2.7.7.67" evidence="1"/>
<dbReference type="EMBL" id="CP001401">
    <property type="protein sequence ID" value="ACP55297.1"/>
    <property type="molecule type" value="Genomic_DNA"/>
</dbReference>
<dbReference type="RefSeq" id="WP_010923068.1">
    <property type="nucleotide sequence ID" value="NC_012632.1"/>
</dbReference>
<dbReference type="SMR" id="C3N5M2"/>
<dbReference type="KEGG" id="sim:M1627_1414"/>
<dbReference type="HOGENOM" id="CLU_105710_0_0_2"/>
<dbReference type="UniPathway" id="UPA00940"/>
<dbReference type="Proteomes" id="UP000002307">
    <property type="component" value="Chromosome"/>
</dbReference>
<dbReference type="GO" id="GO:0005886">
    <property type="term" value="C:plasma membrane"/>
    <property type="evidence" value="ECO:0007669"/>
    <property type="project" value="UniProtKB-SubCell"/>
</dbReference>
<dbReference type="GO" id="GO:0043338">
    <property type="term" value="F:CDP-2,3-bis-(O-geranylgeranyl)-sn-glycerol synthase activity"/>
    <property type="evidence" value="ECO:0007669"/>
    <property type="project" value="UniProtKB-EC"/>
</dbReference>
<dbReference type="GO" id="GO:0046474">
    <property type="term" value="P:glycerophospholipid biosynthetic process"/>
    <property type="evidence" value="ECO:0007669"/>
    <property type="project" value="UniProtKB-UniRule"/>
</dbReference>
<dbReference type="HAMAP" id="MF_01117">
    <property type="entry name" value="CDP_archaeol_synth"/>
    <property type="match status" value="1"/>
</dbReference>
<dbReference type="InterPro" id="IPR032690">
    <property type="entry name" value="CarS"/>
</dbReference>
<dbReference type="InterPro" id="IPR002726">
    <property type="entry name" value="CarS_archaea"/>
</dbReference>
<dbReference type="NCBIfam" id="NF003114">
    <property type="entry name" value="PRK04032.1"/>
    <property type="match status" value="1"/>
</dbReference>
<dbReference type="PANTHER" id="PTHR39650">
    <property type="entry name" value="CDP-ARCHAEOL SYNTHASE"/>
    <property type="match status" value="1"/>
</dbReference>
<dbReference type="PANTHER" id="PTHR39650:SF1">
    <property type="entry name" value="CDP-ARCHAEOL SYNTHASE"/>
    <property type="match status" value="1"/>
</dbReference>
<dbReference type="Pfam" id="PF01864">
    <property type="entry name" value="CarS-like"/>
    <property type="match status" value="1"/>
</dbReference>
<sequence>MSIAYDLLLSILIYLPAFVANGSGPFIKRGTPIDFGKNFVDGRRLFGDGKTFEGLIVALTFGTTVGVIISKFFTAEWTLISFLESLFAMIGDMIGAFIKRRLGIPRGGRVLGLDQLDFVLGASLILVLMRVNITWYQFLFICGLAFFLHQGTNYVAYLLKIKNVPW</sequence>
<proteinExistence type="inferred from homology"/>
<organism>
    <name type="scientific">Saccharolobus islandicus (strain M.16.27)</name>
    <name type="common">Sulfolobus islandicus</name>
    <dbReference type="NCBI Taxonomy" id="427318"/>
    <lineage>
        <taxon>Archaea</taxon>
        <taxon>Thermoproteota</taxon>
        <taxon>Thermoprotei</taxon>
        <taxon>Sulfolobales</taxon>
        <taxon>Sulfolobaceae</taxon>
        <taxon>Saccharolobus</taxon>
    </lineage>
</organism>